<reference key="1">
    <citation type="submission" date="2008-01" db="EMBL/GenBank/DDBJ databases">
        <title>Complete sequence of chromosome of Caulobacter sp. K31.</title>
        <authorList>
            <consortium name="US DOE Joint Genome Institute"/>
            <person name="Copeland A."/>
            <person name="Lucas S."/>
            <person name="Lapidus A."/>
            <person name="Barry K."/>
            <person name="Glavina del Rio T."/>
            <person name="Dalin E."/>
            <person name="Tice H."/>
            <person name="Pitluck S."/>
            <person name="Bruce D."/>
            <person name="Goodwin L."/>
            <person name="Thompson L.S."/>
            <person name="Brettin T."/>
            <person name="Detter J.C."/>
            <person name="Han C."/>
            <person name="Schmutz J."/>
            <person name="Larimer F."/>
            <person name="Land M."/>
            <person name="Hauser L."/>
            <person name="Kyrpides N."/>
            <person name="Kim E."/>
            <person name="Stephens C."/>
            <person name="Richardson P."/>
        </authorList>
    </citation>
    <scope>NUCLEOTIDE SEQUENCE [LARGE SCALE GENOMIC DNA]</scope>
    <source>
        <strain>K31</strain>
    </source>
</reference>
<evidence type="ECO:0000255" key="1">
    <source>
        <dbReference type="HAMAP-Rule" id="MF_00831"/>
    </source>
</evidence>
<proteinExistence type="inferred from homology"/>
<sequence length="129" mass="13849">MPKTVIIPPGTGTPIAPFSPGTLADGIVYVSGTLAFDKDNNVANPDDAEAQTRQVLETIKSVIETAGGTMDDVTMNHIFLTDWSNYQTINKVYAEYFPGDKPARYCIQCGLVKPGFVVEIASVAHIGKT</sequence>
<dbReference type="EC" id="3.5.-.-" evidence="1"/>
<dbReference type="EMBL" id="CP000927">
    <property type="protein sequence ID" value="ABZ73105.1"/>
    <property type="molecule type" value="Genomic_DNA"/>
</dbReference>
<dbReference type="SMR" id="B0SW61"/>
<dbReference type="STRING" id="366602.Caul_3980"/>
<dbReference type="KEGG" id="cak:Caul_3980"/>
<dbReference type="eggNOG" id="COG0251">
    <property type="taxonomic scope" value="Bacteria"/>
</dbReference>
<dbReference type="HOGENOM" id="CLU_100715_7_3_5"/>
<dbReference type="OrthoDB" id="583118at2"/>
<dbReference type="GO" id="GO:0005829">
    <property type="term" value="C:cytosol"/>
    <property type="evidence" value="ECO:0007669"/>
    <property type="project" value="TreeGrafter"/>
</dbReference>
<dbReference type="GO" id="GO:0019239">
    <property type="term" value="F:deaminase activity"/>
    <property type="evidence" value="ECO:0007669"/>
    <property type="project" value="TreeGrafter"/>
</dbReference>
<dbReference type="GO" id="GO:0019740">
    <property type="term" value="P:nitrogen utilization"/>
    <property type="evidence" value="ECO:0007669"/>
    <property type="project" value="UniProtKB-UniRule"/>
</dbReference>
<dbReference type="GO" id="GO:0006212">
    <property type="term" value="P:uracil catabolic process"/>
    <property type="evidence" value="ECO:0007669"/>
    <property type="project" value="UniProtKB-UniRule"/>
</dbReference>
<dbReference type="CDD" id="cd00448">
    <property type="entry name" value="YjgF_YER057c_UK114_family"/>
    <property type="match status" value="1"/>
</dbReference>
<dbReference type="Gene3D" id="3.30.1330.40">
    <property type="entry name" value="RutC-like"/>
    <property type="match status" value="1"/>
</dbReference>
<dbReference type="HAMAP" id="MF_00831">
    <property type="entry name" value="RutC"/>
    <property type="match status" value="1"/>
</dbReference>
<dbReference type="InterPro" id="IPR019898">
    <property type="entry name" value="RutC"/>
</dbReference>
<dbReference type="InterPro" id="IPR035959">
    <property type="entry name" value="RutC-like_sf"/>
</dbReference>
<dbReference type="InterPro" id="IPR006175">
    <property type="entry name" value="YjgF/YER057c/UK114"/>
</dbReference>
<dbReference type="NCBIfam" id="TIGR03610">
    <property type="entry name" value="RutC"/>
    <property type="match status" value="1"/>
</dbReference>
<dbReference type="PANTHER" id="PTHR11803">
    <property type="entry name" value="2-IMINOBUTANOATE/2-IMINOPROPANOATE DEAMINASE RIDA"/>
    <property type="match status" value="1"/>
</dbReference>
<dbReference type="PANTHER" id="PTHR11803:SF58">
    <property type="entry name" value="PROTEIN HMF1-RELATED"/>
    <property type="match status" value="1"/>
</dbReference>
<dbReference type="Pfam" id="PF01042">
    <property type="entry name" value="Ribonuc_L-PSP"/>
    <property type="match status" value="1"/>
</dbReference>
<dbReference type="SUPFAM" id="SSF55298">
    <property type="entry name" value="YjgF-like"/>
    <property type="match status" value="1"/>
</dbReference>
<accession>B0SW61</accession>
<keyword id="KW-0378">Hydrolase</keyword>
<name>RUTC_CAUSK</name>
<comment type="function">
    <text evidence="1">Involved in pyrimidine catabolism. Catalyzes the deamination of 3-aminoacrylate to malonic semialdehyde, a reaction that can also occur spontaneously. RutC may facilitate the reaction and modulate the metabolic fitness, rather than catalyzing essential functions.</text>
</comment>
<comment type="catalytic activity">
    <reaction evidence="1">
        <text>(Z)-3-aminoacrylate + H2O + H(+) = 3-oxopropanoate + NH4(+)</text>
        <dbReference type="Rhea" id="RHEA:34947"/>
        <dbReference type="ChEBI" id="CHEBI:15377"/>
        <dbReference type="ChEBI" id="CHEBI:15378"/>
        <dbReference type="ChEBI" id="CHEBI:28938"/>
        <dbReference type="ChEBI" id="CHEBI:33190"/>
        <dbReference type="ChEBI" id="CHEBI:59894"/>
    </reaction>
</comment>
<comment type="similarity">
    <text evidence="1">Belongs to the RutC family.</text>
</comment>
<gene>
    <name evidence="1" type="primary">rutC</name>
    <name type="ordered locus">Caul_3980</name>
</gene>
<protein>
    <recommendedName>
        <fullName evidence="1">3-aminoacrylate deaminase RutC</fullName>
        <shortName evidence="1">3-AA deaminase</shortName>
        <ecNumber evidence="1">3.5.-.-</ecNumber>
    </recommendedName>
</protein>
<organism>
    <name type="scientific">Caulobacter sp. (strain K31)</name>
    <dbReference type="NCBI Taxonomy" id="366602"/>
    <lineage>
        <taxon>Bacteria</taxon>
        <taxon>Pseudomonadati</taxon>
        <taxon>Pseudomonadota</taxon>
        <taxon>Alphaproteobacteria</taxon>
        <taxon>Caulobacterales</taxon>
        <taxon>Caulobacteraceae</taxon>
        <taxon>Caulobacter</taxon>
    </lineage>
</organism>
<feature type="chain" id="PRO_0000402716" description="3-aminoacrylate deaminase RutC">
    <location>
        <begin position="1"/>
        <end position="129"/>
    </location>
</feature>